<comment type="function">
    <text evidence="1">Catalyzes the 2-thiolation of uridine at the wobble position (U34) of tRNA, leading to the formation of s(2)U34.</text>
</comment>
<comment type="catalytic activity">
    <reaction evidence="1">
        <text>S-sulfanyl-L-cysteinyl-[protein] + uridine(34) in tRNA + AH2 + ATP = 2-thiouridine(34) in tRNA + L-cysteinyl-[protein] + A + AMP + diphosphate + H(+)</text>
        <dbReference type="Rhea" id="RHEA:47032"/>
        <dbReference type="Rhea" id="RHEA-COMP:10131"/>
        <dbReference type="Rhea" id="RHEA-COMP:11726"/>
        <dbReference type="Rhea" id="RHEA-COMP:11727"/>
        <dbReference type="Rhea" id="RHEA-COMP:11728"/>
        <dbReference type="ChEBI" id="CHEBI:13193"/>
        <dbReference type="ChEBI" id="CHEBI:15378"/>
        <dbReference type="ChEBI" id="CHEBI:17499"/>
        <dbReference type="ChEBI" id="CHEBI:29950"/>
        <dbReference type="ChEBI" id="CHEBI:30616"/>
        <dbReference type="ChEBI" id="CHEBI:33019"/>
        <dbReference type="ChEBI" id="CHEBI:61963"/>
        <dbReference type="ChEBI" id="CHEBI:65315"/>
        <dbReference type="ChEBI" id="CHEBI:87170"/>
        <dbReference type="ChEBI" id="CHEBI:456215"/>
        <dbReference type="EC" id="2.8.1.13"/>
    </reaction>
</comment>
<comment type="subcellular location">
    <subcellularLocation>
        <location evidence="1">Cytoplasm</location>
    </subcellularLocation>
</comment>
<comment type="similarity">
    <text evidence="1">Belongs to the MnmA/TRMU family.</text>
</comment>
<dbReference type="EC" id="2.8.1.13" evidence="1"/>
<dbReference type="EMBL" id="CP001130">
    <property type="protein sequence ID" value="ACG57053.1"/>
    <property type="molecule type" value="Genomic_DNA"/>
</dbReference>
<dbReference type="RefSeq" id="WP_012513409.1">
    <property type="nucleotide sequence ID" value="NC_011126.1"/>
</dbReference>
<dbReference type="SMR" id="B4U7E2"/>
<dbReference type="STRING" id="380749.HY04AAS1_0363"/>
<dbReference type="KEGG" id="hya:HY04AAS1_0363"/>
<dbReference type="eggNOG" id="COG0482">
    <property type="taxonomic scope" value="Bacteria"/>
</dbReference>
<dbReference type="HOGENOM" id="CLU_035188_0_0_0"/>
<dbReference type="OrthoDB" id="9800696at2"/>
<dbReference type="GO" id="GO:0005737">
    <property type="term" value="C:cytoplasm"/>
    <property type="evidence" value="ECO:0007669"/>
    <property type="project" value="UniProtKB-SubCell"/>
</dbReference>
<dbReference type="GO" id="GO:0005524">
    <property type="term" value="F:ATP binding"/>
    <property type="evidence" value="ECO:0007669"/>
    <property type="project" value="UniProtKB-KW"/>
</dbReference>
<dbReference type="GO" id="GO:0000049">
    <property type="term" value="F:tRNA binding"/>
    <property type="evidence" value="ECO:0007669"/>
    <property type="project" value="UniProtKB-KW"/>
</dbReference>
<dbReference type="GO" id="GO:0103016">
    <property type="term" value="F:tRNA-uridine 2-sulfurtransferase activity"/>
    <property type="evidence" value="ECO:0007669"/>
    <property type="project" value="UniProtKB-EC"/>
</dbReference>
<dbReference type="GO" id="GO:0002143">
    <property type="term" value="P:tRNA wobble position uridine thiolation"/>
    <property type="evidence" value="ECO:0007669"/>
    <property type="project" value="TreeGrafter"/>
</dbReference>
<dbReference type="CDD" id="cd01998">
    <property type="entry name" value="MnmA_TRMU-like"/>
    <property type="match status" value="1"/>
</dbReference>
<dbReference type="FunFam" id="2.30.30.280:FF:000001">
    <property type="entry name" value="tRNA-specific 2-thiouridylase MnmA"/>
    <property type="match status" value="1"/>
</dbReference>
<dbReference type="Gene3D" id="2.30.30.280">
    <property type="entry name" value="Adenine nucleotide alpha hydrolases-like domains"/>
    <property type="match status" value="1"/>
</dbReference>
<dbReference type="Gene3D" id="3.40.50.620">
    <property type="entry name" value="HUPs"/>
    <property type="match status" value="1"/>
</dbReference>
<dbReference type="Gene3D" id="2.40.30.10">
    <property type="entry name" value="Translation factors"/>
    <property type="match status" value="1"/>
</dbReference>
<dbReference type="HAMAP" id="MF_00144">
    <property type="entry name" value="tRNA_thiouridyl_MnmA"/>
    <property type="match status" value="1"/>
</dbReference>
<dbReference type="InterPro" id="IPR004506">
    <property type="entry name" value="MnmA-like"/>
</dbReference>
<dbReference type="InterPro" id="IPR046885">
    <property type="entry name" value="MnmA-like_C"/>
</dbReference>
<dbReference type="InterPro" id="IPR046884">
    <property type="entry name" value="MnmA-like_central"/>
</dbReference>
<dbReference type="InterPro" id="IPR023382">
    <property type="entry name" value="MnmA-like_central_sf"/>
</dbReference>
<dbReference type="InterPro" id="IPR014729">
    <property type="entry name" value="Rossmann-like_a/b/a_fold"/>
</dbReference>
<dbReference type="NCBIfam" id="NF001138">
    <property type="entry name" value="PRK00143.1"/>
    <property type="match status" value="1"/>
</dbReference>
<dbReference type="NCBIfam" id="TIGR00420">
    <property type="entry name" value="trmU"/>
    <property type="match status" value="1"/>
</dbReference>
<dbReference type="PANTHER" id="PTHR11933:SF5">
    <property type="entry name" value="MITOCHONDRIAL TRNA-SPECIFIC 2-THIOURIDYLASE 1"/>
    <property type="match status" value="1"/>
</dbReference>
<dbReference type="PANTHER" id="PTHR11933">
    <property type="entry name" value="TRNA 5-METHYLAMINOMETHYL-2-THIOURIDYLATE -METHYLTRANSFERASE"/>
    <property type="match status" value="1"/>
</dbReference>
<dbReference type="Pfam" id="PF03054">
    <property type="entry name" value="tRNA_Me_trans"/>
    <property type="match status" value="1"/>
</dbReference>
<dbReference type="Pfam" id="PF20258">
    <property type="entry name" value="tRNA_Me_trans_C"/>
    <property type="match status" value="1"/>
</dbReference>
<dbReference type="Pfam" id="PF20259">
    <property type="entry name" value="tRNA_Me_trans_M"/>
    <property type="match status" value="1"/>
</dbReference>
<dbReference type="SUPFAM" id="SSF52402">
    <property type="entry name" value="Adenine nucleotide alpha hydrolases-like"/>
    <property type="match status" value="1"/>
</dbReference>
<name>MNMA_HYDS0</name>
<reference key="1">
    <citation type="journal article" date="2009" name="J. Bacteriol.">
        <title>Complete and draft genome sequences of six members of the Aquificales.</title>
        <authorList>
            <person name="Reysenbach A.-L."/>
            <person name="Hamamura N."/>
            <person name="Podar M."/>
            <person name="Griffiths E."/>
            <person name="Ferreira S."/>
            <person name="Hochstein R."/>
            <person name="Heidelberg J."/>
            <person name="Johnson J."/>
            <person name="Mead D."/>
            <person name="Pohorille A."/>
            <person name="Sarmiento M."/>
            <person name="Schweighofer K."/>
            <person name="Seshadri R."/>
            <person name="Voytek M.A."/>
        </authorList>
    </citation>
    <scope>NUCLEOTIDE SEQUENCE [LARGE SCALE GENOMIC DNA]</scope>
    <source>
        <strain>Y04AAS1</strain>
    </source>
</reference>
<evidence type="ECO:0000255" key="1">
    <source>
        <dbReference type="HAMAP-Rule" id="MF_00144"/>
    </source>
</evidence>
<sequence length="342" mass="38898">MIIAVGMSGGVDSSVAAYLLKEQGHDVIGVTLRFYKEECKENARVCCSPKDVQDARIVCDMLGIPHITLDWENLFKERVIDYFIKSYKTGLTPNPCAICNKDVKTAFLGFYLKQTADIDFLATGHYVIKEEGKIKRAKEKDQSYFMALVPKQSLDYLMFPVGYMTKQEIRDIAKKINLPVANKIESQDVCFLKGMDLEDYLSQFIDMTQGDIVHIATQKTLGKHKGIHRYTIGQRHGLGVSYHKPLYVVEKDIEKNILYVGEKEYLLKDAITLKDYNKLEDFEKDNMYIQIRYNSKPIPIKHIEENKDNVIIFLKEPATQVAKGQVGAIYFGDILLGGGIIS</sequence>
<accession>B4U7E2</accession>
<keyword id="KW-0067">ATP-binding</keyword>
<keyword id="KW-0963">Cytoplasm</keyword>
<keyword id="KW-1015">Disulfide bond</keyword>
<keyword id="KW-0547">Nucleotide-binding</keyword>
<keyword id="KW-0694">RNA-binding</keyword>
<keyword id="KW-0808">Transferase</keyword>
<keyword id="KW-0819">tRNA processing</keyword>
<keyword id="KW-0820">tRNA-binding</keyword>
<feature type="chain" id="PRO_1000198613" description="tRNA-specific 2-thiouridylase MnmA">
    <location>
        <begin position="1"/>
        <end position="342"/>
    </location>
</feature>
<feature type="region of interest" description="Interaction with tRNA" evidence="1">
    <location>
        <begin position="140"/>
        <end position="142"/>
    </location>
</feature>
<feature type="region of interest" description="Interaction with tRNA" evidence="1">
    <location>
        <begin position="292"/>
        <end position="293"/>
    </location>
</feature>
<feature type="active site" description="Nucleophile" evidence="1">
    <location>
        <position position="99"/>
    </location>
</feature>
<feature type="active site" description="Cysteine persulfide intermediate" evidence="1">
    <location>
        <position position="190"/>
    </location>
</feature>
<feature type="binding site" evidence="1">
    <location>
        <begin position="6"/>
        <end position="13"/>
    </location>
    <ligand>
        <name>ATP</name>
        <dbReference type="ChEBI" id="CHEBI:30616"/>
    </ligand>
</feature>
<feature type="binding site" evidence="1">
    <location>
        <position position="32"/>
    </location>
    <ligand>
        <name>ATP</name>
        <dbReference type="ChEBI" id="CHEBI:30616"/>
    </ligand>
</feature>
<feature type="binding site" evidence="1">
    <location>
        <position position="124"/>
    </location>
    <ligand>
        <name>ATP</name>
        <dbReference type="ChEBI" id="CHEBI:30616"/>
    </ligand>
</feature>
<feature type="site" description="Interaction with tRNA" evidence="1">
    <location>
        <position position="125"/>
    </location>
</feature>
<feature type="site" description="Interaction with tRNA" evidence="1">
    <location>
        <position position="325"/>
    </location>
</feature>
<feature type="disulfide bond" description="Alternate" evidence="1">
    <location>
        <begin position="99"/>
        <end position="190"/>
    </location>
</feature>
<organism>
    <name type="scientific">Hydrogenobaculum sp. (strain Y04AAS1)</name>
    <dbReference type="NCBI Taxonomy" id="380749"/>
    <lineage>
        <taxon>Bacteria</taxon>
        <taxon>Pseudomonadati</taxon>
        <taxon>Aquificota</taxon>
        <taxon>Aquificia</taxon>
        <taxon>Aquificales</taxon>
        <taxon>Aquificaceae</taxon>
        <taxon>Hydrogenobaculum</taxon>
    </lineage>
</organism>
<gene>
    <name evidence="1" type="primary">mnmA</name>
    <name type="ordered locus">HY04AAS1_0363</name>
</gene>
<proteinExistence type="inferred from homology"/>
<protein>
    <recommendedName>
        <fullName evidence="1">tRNA-specific 2-thiouridylase MnmA</fullName>
        <ecNumber evidence="1">2.8.1.13</ecNumber>
    </recommendedName>
</protein>